<proteinExistence type="evidence at protein level"/>
<protein>
    <recommendedName>
        <fullName>tRNA pseudouridine synthase-like 1</fullName>
        <ecNumber>5.4.99.-</ecNumber>
    </recommendedName>
    <alternativeName>
        <fullName>tRNA pseudouridylate synthase-like 1</fullName>
    </alternativeName>
    <alternativeName>
        <fullName>tRNA-uridine isomerase-like 1</fullName>
    </alternativeName>
</protein>
<gene>
    <name type="primary">PUSL1</name>
</gene>
<evidence type="ECO:0000250" key="1"/>
<evidence type="ECO:0000303" key="2">
    <source>
    </source>
</evidence>
<evidence type="ECO:0000305" key="3"/>
<evidence type="ECO:0007744" key="4">
    <source>
    </source>
</evidence>
<organism>
    <name type="scientific">Homo sapiens</name>
    <name type="common">Human</name>
    <dbReference type="NCBI Taxonomy" id="9606"/>
    <lineage>
        <taxon>Eukaryota</taxon>
        <taxon>Metazoa</taxon>
        <taxon>Chordata</taxon>
        <taxon>Craniata</taxon>
        <taxon>Vertebrata</taxon>
        <taxon>Euteleostomi</taxon>
        <taxon>Mammalia</taxon>
        <taxon>Eutheria</taxon>
        <taxon>Euarchontoglires</taxon>
        <taxon>Primates</taxon>
        <taxon>Haplorrhini</taxon>
        <taxon>Catarrhini</taxon>
        <taxon>Hominidae</taxon>
        <taxon>Homo</taxon>
    </lineage>
</organism>
<accession>Q8N0Z8</accession>
<accession>B4DP76</accession>
<accession>Q5TA41</accession>
<keyword id="KW-0025">Alternative splicing</keyword>
<keyword id="KW-0413">Isomerase</keyword>
<keyword id="KW-0597">Phosphoprotein</keyword>
<keyword id="KW-1267">Proteomics identification</keyword>
<keyword id="KW-1185">Reference proteome</keyword>
<keyword id="KW-0819">tRNA processing</keyword>
<dbReference type="EC" id="5.4.99.-"/>
<dbReference type="EMBL" id="AK075292">
    <property type="protein sequence ID" value="BAC11527.1"/>
    <property type="molecule type" value="mRNA"/>
</dbReference>
<dbReference type="EMBL" id="AK298218">
    <property type="protein sequence ID" value="BAG60488.1"/>
    <property type="molecule type" value="mRNA"/>
</dbReference>
<dbReference type="EMBL" id="AL139287">
    <property type="status" value="NOT_ANNOTATED_CDS"/>
    <property type="molecule type" value="Genomic_DNA"/>
</dbReference>
<dbReference type="EMBL" id="CH471183">
    <property type="protein sequence ID" value="EAW56245.1"/>
    <property type="molecule type" value="Genomic_DNA"/>
</dbReference>
<dbReference type="EMBL" id="BC034304">
    <property type="protein sequence ID" value="AAH34304.1"/>
    <property type="molecule type" value="mRNA"/>
</dbReference>
<dbReference type="CCDS" id="CCDS20.1">
    <molecule id="Q8N0Z8-1"/>
</dbReference>
<dbReference type="RefSeq" id="NP_699170.1">
    <molecule id="Q8N0Z8-1"/>
    <property type="nucleotide sequence ID" value="NM_153339.3"/>
</dbReference>
<dbReference type="SMR" id="Q8N0Z8"/>
<dbReference type="BioGRID" id="126015">
    <property type="interactions" value="68"/>
</dbReference>
<dbReference type="FunCoup" id="Q8N0Z8">
    <property type="interactions" value="1197"/>
</dbReference>
<dbReference type="IntAct" id="Q8N0Z8">
    <property type="interactions" value="50"/>
</dbReference>
<dbReference type="MINT" id="Q8N0Z8"/>
<dbReference type="STRING" id="9606.ENSP00000368318"/>
<dbReference type="iPTMnet" id="Q8N0Z8"/>
<dbReference type="PhosphoSitePlus" id="Q8N0Z8"/>
<dbReference type="BioMuta" id="PUSL1"/>
<dbReference type="DMDM" id="52783232"/>
<dbReference type="jPOST" id="Q8N0Z8"/>
<dbReference type="MassIVE" id="Q8N0Z8"/>
<dbReference type="PaxDb" id="9606-ENSP00000368318"/>
<dbReference type="PeptideAtlas" id="Q8N0Z8"/>
<dbReference type="ProteomicsDB" id="71494">
    <molecule id="Q8N0Z8-1"/>
</dbReference>
<dbReference type="ProteomicsDB" id="71495">
    <molecule id="Q8N0Z8-2"/>
</dbReference>
<dbReference type="Pumba" id="Q8N0Z8"/>
<dbReference type="Antibodypedia" id="26254">
    <property type="antibodies" value="70 antibodies from 17 providers"/>
</dbReference>
<dbReference type="DNASU" id="126789"/>
<dbReference type="Ensembl" id="ENST00000379031.10">
    <molecule id="Q8N0Z8-1"/>
    <property type="protein sequence ID" value="ENSP00000368318.5"/>
    <property type="gene ID" value="ENSG00000169972.13"/>
</dbReference>
<dbReference type="GeneID" id="126789"/>
<dbReference type="KEGG" id="hsa:126789"/>
<dbReference type="MANE-Select" id="ENST00000379031.10">
    <property type="protein sequence ID" value="ENSP00000368318.5"/>
    <property type="RefSeq nucleotide sequence ID" value="NM_153339.3"/>
    <property type="RefSeq protein sequence ID" value="NP_699170.1"/>
</dbReference>
<dbReference type="UCSC" id="uc001aed.4">
    <molecule id="Q8N0Z8-1"/>
    <property type="organism name" value="human"/>
</dbReference>
<dbReference type="AGR" id="HGNC:26914"/>
<dbReference type="CTD" id="126789"/>
<dbReference type="GeneCards" id="PUSL1"/>
<dbReference type="HGNC" id="HGNC:26914">
    <property type="gene designation" value="PUSL1"/>
</dbReference>
<dbReference type="HPA" id="ENSG00000169972">
    <property type="expression patterns" value="Low tissue specificity"/>
</dbReference>
<dbReference type="neXtProt" id="NX_Q8N0Z8"/>
<dbReference type="OpenTargets" id="ENSG00000169972"/>
<dbReference type="PharmGKB" id="PA134947837"/>
<dbReference type="VEuPathDB" id="HostDB:ENSG00000169972"/>
<dbReference type="eggNOG" id="KOG4393">
    <property type="taxonomic scope" value="Eukaryota"/>
</dbReference>
<dbReference type="GeneTree" id="ENSGT00950000183160"/>
<dbReference type="HOGENOM" id="CLU_014673_3_1_1"/>
<dbReference type="InParanoid" id="Q8N0Z8"/>
<dbReference type="OMA" id="ADAFCHN"/>
<dbReference type="OrthoDB" id="271910at2759"/>
<dbReference type="PAN-GO" id="Q8N0Z8">
    <property type="GO annotations" value="2 GO annotations based on evolutionary models"/>
</dbReference>
<dbReference type="PhylomeDB" id="Q8N0Z8"/>
<dbReference type="TreeFam" id="TF105127"/>
<dbReference type="PathwayCommons" id="Q8N0Z8"/>
<dbReference type="SignaLink" id="Q8N0Z8"/>
<dbReference type="BioGRID-ORCS" id="126789">
    <property type="hits" value="26 hits in 1163 CRISPR screens"/>
</dbReference>
<dbReference type="ChiTaRS" id="PUSL1">
    <property type="organism name" value="human"/>
</dbReference>
<dbReference type="GenomeRNAi" id="126789"/>
<dbReference type="Pharos" id="Q8N0Z8">
    <property type="development level" value="Tdark"/>
</dbReference>
<dbReference type="PRO" id="PR:Q8N0Z8"/>
<dbReference type="Proteomes" id="UP000005640">
    <property type="component" value="Chromosome 1"/>
</dbReference>
<dbReference type="RNAct" id="Q8N0Z8">
    <property type="molecule type" value="protein"/>
</dbReference>
<dbReference type="Bgee" id="ENSG00000169972">
    <property type="expression patterns" value="Expressed in lower esophagus mucosa and 123 other cell types or tissues"/>
</dbReference>
<dbReference type="ExpressionAtlas" id="Q8N0Z8">
    <property type="expression patterns" value="baseline and differential"/>
</dbReference>
<dbReference type="GO" id="GO:0043231">
    <property type="term" value="C:intracellular membrane-bounded organelle"/>
    <property type="evidence" value="ECO:0000314"/>
    <property type="project" value="HPA"/>
</dbReference>
<dbReference type="GO" id="GO:0005739">
    <property type="term" value="C:mitochondrion"/>
    <property type="evidence" value="ECO:0000314"/>
    <property type="project" value="FlyBase"/>
</dbReference>
<dbReference type="GO" id="GO:0009982">
    <property type="term" value="F:pseudouridine synthase activity"/>
    <property type="evidence" value="ECO:0000318"/>
    <property type="project" value="GO_Central"/>
</dbReference>
<dbReference type="GO" id="GO:0003723">
    <property type="term" value="F:RNA binding"/>
    <property type="evidence" value="ECO:0007669"/>
    <property type="project" value="InterPro"/>
</dbReference>
<dbReference type="GO" id="GO:0106029">
    <property type="term" value="F:tRNA pseudouridine synthase activity"/>
    <property type="evidence" value="ECO:0007669"/>
    <property type="project" value="RHEA"/>
</dbReference>
<dbReference type="GO" id="GO:0031119">
    <property type="term" value="P:tRNA pseudouridine synthesis"/>
    <property type="evidence" value="ECO:0000318"/>
    <property type="project" value="GO_Central"/>
</dbReference>
<dbReference type="CDD" id="cd02570">
    <property type="entry name" value="PseudoU_synth_EcTruA"/>
    <property type="match status" value="1"/>
</dbReference>
<dbReference type="FunFam" id="3.30.70.580:FF:000011">
    <property type="entry name" value="tRNA pseudouridine synthase"/>
    <property type="match status" value="1"/>
</dbReference>
<dbReference type="FunFam" id="3.30.70.660:FF:000006">
    <property type="entry name" value="tRNA pseudouridine synthase"/>
    <property type="match status" value="1"/>
</dbReference>
<dbReference type="Gene3D" id="3.30.70.660">
    <property type="entry name" value="Pseudouridine synthase I, catalytic domain, C-terminal subdomain"/>
    <property type="match status" value="1"/>
</dbReference>
<dbReference type="Gene3D" id="3.30.70.580">
    <property type="entry name" value="Pseudouridine synthase I, catalytic domain, N-terminal subdomain"/>
    <property type="match status" value="1"/>
</dbReference>
<dbReference type="HAMAP" id="MF_00171">
    <property type="entry name" value="TruA"/>
    <property type="match status" value="1"/>
</dbReference>
<dbReference type="InterPro" id="IPR020103">
    <property type="entry name" value="PsdUridine_synth_cat_dom_sf"/>
</dbReference>
<dbReference type="InterPro" id="IPR001406">
    <property type="entry name" value="PsdUridine_synth_TruA"/>
</dbReference>
<dbReference type="InterPro" id="IPR020097">
    <property type="entry name" value="PsdUridine_synth_TruA_a/b_dom"/>
</dbReference>
<dbReference type="InterPro" id="IPR020095">
    <property type="entry name" value="PsdUridine_synth_TruA_C"/>
</dbReference>
<dbReference type="InterPro" id="IPR020094">
    <property type="entry name" value="TruA/RsuA/RluB/E/F_N"/>
</dbReference>
<dbReference type="PANTHER" id="PTHR11142">
    <property type="entry name" value="PSEUDOURIDYLATE SYNTHASE"/>
    <property type="match status" value="1"/>
</dbReference>
<dbReference type="PANTHER" id="PTHR11142:SF0">
    <property type="entry name" value="TRNA PSEUDOURIDINE SYNTHASE-LIKE 1"/>
    <property type="match status" value="1"/>
</dbReference>
<dbReference type="Pfam" id="PF01416">
    <property type="entry name" value="PseudoU_synth_1"/>
    <property type="match status" value="2"/>
</dbReference>
<dbReference type="PIRSF" id="PIRSF001430">
    <property type="entry name" value="tRNA_psdUrid_synth"/>
    <property type="match status" value="1"/>
</dbReference>
<dbReference type="SUPFAM" id="SSF55120">
    <property type="entry name" value="Pseudouridine synthase"/>
    <property type="match status" value="1"/>
</dbReference>
<sequence>MSSAPASGSVRARYLVYFQYVGTDFNGVAAVRGTQRAVGVQNYLEEAAERLNSVEPVRFTISSRTDAGVHALSNAAHLDVQRRSGRPPFPPEVLAEALNTHLRHPAIRVLRAFRVPSDFHARHAATSRTYLYRLATGCHRRDELPVFERNLCWTLPADCLDMVAMQEAAQHLLGTHDFSAFQSAGSPVPSPVRTLRRVSVSPGQASPLVTPEESRKLRFWNLEFESQSFLYRQVRRMTAVLVAVGLGALAPAQVKTILESQDPLGKHQTRVAPAHGLFLKSVLYGNLGAASCTLQGPQFGSHG</sequence>
<name>PUSL1_HUMAN</name>
<comment type="catalytic activity">
    <reaction>
        <text>a uridine in tRNA = a pseudouridine in tRNA</text>
        <dbReference type="Rhea" id="RHEA:54572"/>
        <dbReference type="Rhea" id="RHEA-COMP:13339"/>
        <dbReference type="Rhea" id="RHEA-COMP:13934"/>
        <dbReference type="ChEBI" id="CHEBI:65314"/>
        <dbReference type="ChEBI" id="CHEBI:65315"/>
    </reaction>
</comment>
<comment type="alternative products">
    <event type="alternative splicing"/>
    <isoform>
        <id>Q8N0Z8-1</id>
        <name>1</name>
        <sequence type="displayed"/>
    </isoform>
    <isoform>
        <id>Q8N0Z8-2</id>
        <name>2</name>
        <sequence type="described" ref="VSP_036048"/>
    </isoform>
</comment>
<comment type="similarity">
    <text evidence="3">Belongs to the tRNA pseudouridine synthase TruA family.</text>
</comment>
<reference key="1">
    <citation type="journal article" date="2004" name="Nat. Genet.">
        <title>Complete sequencing and characterization of 21,243 full-length human cDNAs.</title>
        <authorList>
            <person name="Ota T."/>
            <person name="Suzuki Y."/>
            <person name="Nishikawa T."/>
            <person name="Otsuki T."/>
            <person name="Sugiyama T."/>
            <person name="Irie R."/>
            <person name="Wakamatsu A."/>
            <person name="Hayashi K."/>
            <person name="Sato H."/>
            <person name="Nagai K."/>
            <person name="Kimura K."/>
            <person name="Makita H."/>
            <person name="Sekine M."/>
            <person name="Obayashi M."/>
            <person name="Nishi T."/>
            <person name="Shibahara T."/>
            <person name="Tanaka T."/>
            <person name="Ishii S."/>
            <person name="Yamamoto J."/>
            <person name="Saito K."/>
            <person name="Kawai Y."/>
            <person name="Isono Y."/>
            <person name="Nakamura Y."/>
            <person name="Nagahari K."/>
            <person name="Murakami K."/>
            <person name="Yasuda T."/>
            <person name="Iwayanagi T."/>
            <person name="Wagatsuma M."/>
            <person name="Shiratori A."/>
            <person name="Sudo H."/>
            <person name="Hosoiri T."/>
            <person name="Kaku Y."/>
            <person name="Kodaira H."/>
            <person name="Kondo H."/>
            <person name="Sugawara M."/>
            <person name="Takahashi M."/>
            <person name="Kanda K."/>
            <person name="Yokoi T."/>
            <person name="Furuya T."/>
            <person name="Kikkawa E."/>
            <person name="Omura Y."/>
            <person name="Abe K."/>
            <person name="Kamihara K."/>
            <person name="Katsuta N."/>
            <person name="Sato K."/>
            <person name="Tanikawa M."/>
            <person name="Yamazaki M."/>
            <person name="Ninomiya K."/>
            <person name="Ishibashi T."/>
            <person name="Yamashita H."/>
            <person name="Murakawa K."/>
            <person name="Fujimori K."/>
            <person name="Tanai H."/>
            <person name="Kimata M."/>
            <person name="Watanabe M."/>
            <person name="Hiraoka S."/>
            <person name="Chiba Y."/>
            <person name="Ishida S."/>
            <person name="Ono Y."/>
            <person name="Takiguchi S."/>
            <person name="Watanabe S."/>
            <person name="Yosida M."/>
            <person name="Hotuta T."/>
            <person name="Kusano J."/>
            <person name="Kanehori K."/>
            <person name="Takahashi-Fujii A."/>
            <person name="Hara H."/>
            <person name="Tanase T.-O."/>
            <person name="Nomura Y."/>
            <person name="Togiya S."/>
            <person name="Komai F."/>
            <person name="Hara R."/>
            <person name="Takeuchi K."/>
            <person name="Arita M."/>
            <person name="Imose N."/>
            <person name="Musashino K."/>
            <person name="Yuuki H."/>
            <person name="Oshima A."/>
            <person name="Sasaki N."/>
            <person name="Aotsuka S."/>
            <person name="Yoshikawa Y."/>
            <person name="Matsunawa H."/>
            <person name="Ichihara T."/>
            <person name="Shiohata N."/>
            <person name="Sano S."/>
            <person name="Moriya S."/>
            <person name="Momiyama H."/>
            <person name="Satoh N."/>
            <person name="Takami S."/>
            <person name="Terashima Y."/>
            <person name="Suzuki O."/>
            <person name="Nakagawa S."/>
            <person name="Senoh A."/>
            <person name="Mizoguchi H."/>
            <person name="Goto Y."/>
            <person name="Shimizu F."/>
            <person name="Wakebe H."/>
            <person name="Hishigaki H."/>
            <person name="Watanabe T."/>
            <person name="Sugiyama A."/>
            <person name="Takemoto M."/>
            <person name="Kawakami B."/>
            <person name="Yamazaki M."/>
            <person name="Watanabe K."/>
            <person name="Kumagai A."/>
            <person name="Itakura S."/>
            <person name="Fukuzumi Y."/>
            <person name="Fujimori Y."/>
            <person name="Komiyama M."/>
            <person name="Tashiro H."/>
            <person name="Tanigami A."/>
            <person name="Fujiwara T."/>
            <person name="Ono T."/>
            <person name="Yamada K."/>
            <person name="Fujii Y."/>
            <person name="Ozaki K."/>
            <person name="Hirao M."/>
            <person name="Ohmori Y."/>
            <person name="Kawabata A."/>
            <person name="Hikiji T."/>
            <person name="Kobatake N."/>
            <person name="Inagaki H."/>
            <person name="Ikema Y."/>
            <person name="Okamoto S."/>
            <person name="Okitani R."/>
            <person name="Kawakami T."/>
            <person name="Noguchi S."/>
            <person name="Itoh T."/>
            <person name="Shigeta K."/>
            <person name="Senba T."/>
            <person name="Matsumura K."/>
            <person name="Nakajima Y."/>
            <person name="Mizuno T."/>
            <person name="Morinaga M."/>
            <person name="Sasaki M."/>
            <person name="Togashi T."/>
            <person name="Oyama M."/>
            <person name="Hata H."/>
            <person name="Watanabe M."/>
            <person name="Komatsu T."/>
            <person name="Mizushima-Sugano J."/>
            <person name="Satoh T."/>
            <person name="Shirai Y."/>
            <person name="Takahashi Y."/>
            <person name="Nakagawa K."/>
            <person name="Okumura K."/>
            <person name="Nagase T."/>
            <person name="Nomura N."/>
            <person name="Kikuchi H."/>
            <person name="Masuho Y."/>
            <person name="Yamashita R."/>
            <person name="Nakai K."/>
            <person name="Yada T."/>
            <person name="Nakamura Y."/>
            <person name="Ohara O."/>
            <person name="Isogai T."/>
            <person name="Sugano S."/>
        </authorList>
    </citation>
    <scope>NUCLEOTIDE SEQUENCE [LARGE SCALE MRNA] (ISOFORMS 1 AND 2)</scope>
</reference>
<reference key="2">
    <citation type="journal article" date="2006" name="Nature">
        <title>The DNA sequence and biological annotation of human chromosome 1.</title>
        <authorList>
            <person name="Gregory S.G."/>
            <person name="Barlow K.F."/>
            <person name="McLay K.E."/>
            <person name="Kaul R."/>
            <person name="Swarbreck D."/>
            <person name="Dunham A."/>
            <person name="Scott C.E."/>
            <person name="Howe K.L."/>
            <person name="Woodfine K."/>
            <person name="Spencer C.C.A."/>
            <person name="Jones M.C."/>
            <person name="Gillson C."/>
            <person name="Searle S."/>
            <person name="Zhou Y."/>
            <person name="Kokocinski F."/>
            <person name="McDonald L."/>
            <person name="Evans R."/>
            <person name="Phillips K."/>
            <person name="Atkinson A."/>
            <person name="Cooper R."/>
            <person name="Jones C."/>
            <person name="Hall R.E."/>
            <person name="Andrews T.D."/>
            <person name="Lloyd C."/>
            <person name="Ainscough R."/>
            <person name="Almeida J.P."/>
            <person name="Ambrose K.D."/>
            <person name="Anderson F."/>
            <person name="Andrew R.W."/>
            <person name="Ashwell R.I.S."/>
            <person name="Aubin K."/>
            <person name="Babbage A.K."/>
            <person name="Bagguley C.L."/>
            <person name="Bailey J."/>
            <person name="Beasley H."/>
            <person name="Bethel G."/>
            <person name="Bird C.P."/>
            <person name="Bray-Allen S."/>
            <person name="Brown J.Y."/>
            <person name="Brown A.J."/>
            <person name="Buckley D."/>
            <person name="Burton J."/>
            <person name="Bye J."/>
            <person name="Carder C."/>
            <person name="Chapman J.C."/>
            <person name="Clark S.Y."/>
            <person name="Clarke G."/>
            <person name="Clee C."/>
            <person name="Cobley V."/>
            <person name="Collier R.E."/>
            <person name="Corby N."/>
            <person name="Coville G.J."/>
            <person name="Davies J."/>
            <person name="Deadman R."/>
            <person name="Dunn M."/>
            <person name="Earthrowl M."/>
            <person name="Ellington A.G."/>
            <person name="Errington H."/>
            <person name="Frankish A."/>
            <person name="Frankland J."/>
            <person name="French L."/>
            <person name="Garner P."/>
            <person name="Garnett J."/>
            <person name="Gay L."/>
            <person name="Ghori M.R.J."/>
            <person name="Gibson R."/>
            <person name="Gilby L.M."/>
            <person name="Gillett W."/>
            <person name="Glithero R.J."/>
            <person name="Grafham D.V."/>
            <person name="Griffiths C."/>
            <person name="Griffiths-Jones S."/>
            <person name="Grocock R."/>
            <person name="Hammond S."/>
            <person name="Harrison E.S.I."/>
            <person name="Hart E."/>
            <person name="Haugen E."/>
            <person name="Heath P.D."/>
            <person name="Holmes S."/>
            <person name="Holt K."/>
            <person name="Howden P.J."/>
            <person name="Hunt A.R."/>
            <person name="Hunt S.E."/>
            <person name="Hunter G."/>
            <person name="Isherwood J."/>
            <person name="James R."/>
            <person name="Johnson C."/>
            <person name="Johnson D."/>
            <person name="Joy A."/>
            <person name="Kay M."/>
            <person name="Kershaw J.K."/>
            <person name="Kibukawa M."/>
            <person name="Kimberley A.M."/>
            <person name="King A."/>
            <person name="Knights A.J."/>
            <person name="Lad H."/>
            <person name="Laird G."/>
            <person name="Lawlor S."/>
            <person name="Leongamornlert D.A."/>
            <person name="Lloyd D.M."/>
            <person name="Loveland J."/>
            <person name="Lovell J."/>
            <person name="Lush M.J."/>
            <person name="Lyne R."/>
            <person name="Martin S."/>
            <person name="Mashreghi-Mohammadi M."/>
            <person name="Matthews L."/>
            <person name="Matthews N.S.W."/>
            <person name="McLaren S."/>
            <person name="Milne S."/>
            <person name="Mistry S."/>
            <person name="Moore M.J.F."/>
            <person name="Nickerson T."/>
            <person name="O'Dell C.N."/>
            <person name="Oliver K."/>
            <person name="Palmeiri A."/>
            <person name="Palmer S.A."/>
            <person name="Parker A."/>
            <person name="Patel D."/>
            <person name="Pearce A.V."/>
            <person name="Peck A.I."/>
            <person name="Pelan S."/>
            <person name="Phelps K."/>
            <person name="Phillimore B.J."/>
            <person name="Plumb R."/>
            <person name="Rajan J."/>
            <person name="Raymond C."/>
            <person name="Rouse G."/>
            <person name="Saenphimmachak C."/>
            <person name="Sehra H.K."/>
            <person name="Sheridan E."/>
            <person name="Shownkeen R."/>
            <person name="Sims S."/>
            <person name="Skuce C.D."/>
            <person name="Smith M."/>
            <person name="Steward C."/>
            <person name="Subramanian S."/>
            <person name="Sycamore N."/>
            <person name="Tracey A."/>
            <person name="Tromans A."/>
            <person name="Van Helmond Z."/>
            <person name="Wall M."/>
            <person name="Wallis J.M."/>
            <person name="White S."/>
            <person name="Whitehead S.L."/>
            <person name="Wilkinson J.E."/>
            <person name="Willey D.L."/>
            <person name="Williams H."/>
            <person name="Wilming L."/>
            <person name="Wray P.W."/>
            <person name="Wu Z."/>
            <person name="Coulson A."/>
            <person name="Vaudin M."/>
            <person name="Sulston J.E."/>
            <person name="Durbin R.M."/>
            <person name="Hubbard T."/>
            <person name="Wooster R."/>
            <person name="Dunham I."/>
            <person name="Carter N.P."/>
            <person name="McVean G."/>
            <person name="Ross M.T."/>
            <person name="Harrow J."/>
            <person name="Olson M.V."/>
            <person name="Beck S."/>
            <person name="Rogers J."/>
            <person name="Bentley D.R."/>
        </authorList>
    </citation>
    <scope>NUCLEOTIDE SEQUENCE [LARGE SCALE GENOMIC DNA]</scope>
</reference>
<reference key="3">
    <citation type="submission" date="2005-07" db="EMBL/GenBank/DDBJ databases">
        <authorList>
            <person name="Mural R.J."/>
            <person name="Istrail S."/>
            <person name="Sutton G.G."/>
            <person name="Florea L."/>
            <person name="Halpern A.L."/>
            <person name="Mobarry C.M."/>
            <person name="Lippert R."/>
            <person name="Walenz B."/>
            <person name="Shatkay H."/>
            <person name="Dew I."/>
            <person name="Miller J.R."/>
            <person name="Flanigan M.J."/>
            <person name="Edwards N.J."/>
            <person name="Bolanos R."/>
            <person name="Fasulo D."/>
            <person name="Halldorsson B.V."/>
            <person name="Hannenhalli S."/>
            <person name="Turner R."/>
            <person name="Yooseph S."/>
            <person name="Lu F."/>
            <person name="Nusskern D.R."/>
            <person name="Shue B.C."/>
            <person name="Zheng X.H."/>
            <person name="Zhong F."/>
            <person name="Delcher A.L."/>
            <person name="Huson D.H."/>
            <person name="Kravitz S.A."/>
            <person name="Mouchard L."/>
            <person name="Reinert K."/>
            <person name="Remington K.A."/>
            <person name="Clark A.G."/>
            <person name="Waterman M.S."/>
            <person name="Eichler E.E."/>
            <person name="Adams M.D."/>
            <person name="Hunkapiller M.W."/>
            <person name="Myers E.W."/>
            <person name="Venter J.C."/>
        </authorList>
    </citation>
    <scope>NUCLEOTIDE SEQUENCE [LARGE SCALE GENOMIC DNA]</scope>
</reference>
<reference key="4">
    <citation type="journal article" date="2004" name="Genome Res.">
        <title>The status, quality, and expansion of the NIH full-length cDNA project: the Mammalian Gene Collection (MGC).</title>
        <authorList>
            <consortium name="The MGC Project Team"/>
        </authorList>
    </citation>
    <scope>NUCLEOTIDE SEQUENCE [LARGE SCALE MRNA] (ISOFORM 1)</scope>
    <source>
        <tissue>Skin</tissue>
    </source>
</reference>
<reference key="5">
    <citation type="journal article" date="2009" name="Sci. Signal.">
        <title>Quantitative phosphoproteomic analysis of T cell receptor signaling reveals system-wide modulation of protein-protein interactions.</title>
        <authorList>
            <person name="Mayya V."/>
            <person name="Lundgren D.H."/>
            <person name="Hwang S.-I."/>
            <person name="Rezaul K."/>
            <person name="Wu L."/>
            <person name="Eng J.K."/>
            <person name="Rodionov V."/>
            <person name="Han D.K."/>
        </authorList>
    </citation>
    <scope>PHOSPHORYLATION [LARGE SCALE ANALYSIS] AT SER-84</scope>
    <scope>IDENTIFICATION BY MASS SPECTROMETRY [LARGE SCALE ANALYSIS]</scope>
    <source>
        <tissue>Leukemic T-cell</tissue>
    </source>
</reference>
<feature type="chain" id="PRO_0000057522" description="tRNA pseudouridine synthase-like 1">
    <location>
        <begin position="1"/>
        <end position="303"/>
    </location>
</feature>
<feature type="active site" description="Nucleophile" evidence="1">
    <location>
        <position position="66"/>
    </location>
</feature>
<feature type="binding site" evidence="1">
    <location>
        <position position="130"/>
    </location>
    <ligand>
        <name>substrate</name>
    </ligand>
</feature>
<feature type="modified residue" description="Phosphoserine" evidence="4">
    <location>
        <position position="84"/>
    </location>
</feature>
<feature type="splice variant" id="VSP_036048" description="In isoform 2." evidence="2">
    <location>
        <begin position="1"/>
        <end position="161"/>
    </location>
</feature>
<feature type="sequence variant" id="VAR_034424" description="In dbSNP:rs12094447.">
    <original>R</original>
    <variation>Q</variation>
    <location>
        <position position="103"/>
    </location>
</feature>
<feature type="sequence variant" id="VAR_051869" description="In dbSNP:rs34738574.">
    <original>R</original>
    <variation>W</variation>
    <location>
        <position position="197"/>
    </location>
</feature>